<reference key="1">
    <citation type="journal article" date="2004" name="DNA Res.">
        <title>Complete nucleotide sequence of the sugarcane (Saccharum officinarum) chloroplast genome: a comparative analysis of four monocot chloroplast genomes.</title>
        <authorList>
            <person name="Asano T."/>
            <person name="Tsudzuki T."/>
            <person name="Takahashi S."/>
            <person name="Shimada H."/>
            <person name="Kadowaki K."/>
        </authorList>
    </citation>
    <scope>NUCLEOTIDE SEQUENCE [LARGE SCALE GENOMIC DNA]</scope>
</reference>
<gene>
    <name type="primary">rps15-A</name>
</gene>
<gene>
    <name type="primary">rps15-B</name>
</gene>
<accession>Q6ENQ1</accession>
<dbReference type="EMBL" id="AP006714">
    <property type="protein sequence ID" value="BAD27355.1"/>
    <property type="molecule type" value="Genomic_DNA"/>
</dbReference>
<dbReference type="EMBL" id="AP006714">
    <property type="protein sequence ID" value="BAD27366.1"/>
    <property type="molecule type" value="Genomic_DNA"/>
</dbReference>
<dbReference type="SMR" id="Q6ENQ1"/>
<dbReference type="GO" id="GO:0009507">
    <property type="term" value="C:chloroplast"/>
    <property type="evidence" value="ECO:0007669"/>
    <property type="project" value="UniProtKB-SubCell"/>
</dbReference>
<dbReference type="GO" id="GO:1990904">
    <property type="term" value="C:ribonucleoprotein complex"/>
    <property type="evidence" value="ECO:0007669"/>
    <property type="project" value="UniProtKB-KW"/>
</dbReference>
<dbReference type="GO" id="GO:0005840">
    <property type="term" value="C:ribosome"/>
    <property type="evidence" value="ECO:0007669"/>
    <property type="project" value="UniProtKB-KW"/>
</dbReference>
<dbReference type="GO" id="GO:0003735">
    <property type="term" value="F:structural constituent of ribosome"/>
    <property type="evidence" value="ECO:0007669"/>
    <property type="project" value="InterPro"/>
</dbReference>
<dbReference type="GO" id="GO:0006412">
    <property type="term" value="P:translation"/>
    <property type="evidence" value="ECO:0007669"/>
    <property type="project" value="UniProtKB-UniRule"/>
</dbReference>
<dbReference type="CDD" id="cd00353">
    <property type="entry name" value="Ribosomal_S15p_S13e"/>
    <property type="match status" value="1"/>
</dbReference>
<dbReference type="Gene3D" id="1.10.287.10">
    <property type="entry name" value="S15/NS1, RNA-binding"/>
    <property type="match status" value="1"/>
</dbReference>
<dbReference type="HAMAP" id="MF_01343_B">
    <property type="entry name" value="Ribosomal_uS15_B"/>
    <property type="match status" value="1"/>
</dbReference>
<dbReference type="InterPro" id="IPR000589">
    <property type="entry name" value="Ribosomal_uS15"/>
</dbReference>
<dbReference type="InterPro" id="IPR005290">
    <property type="entry name" value="Ribosomal_uS15_bac-type"/>
</dbReference>
<dbReference type="InterPro" id="IPR009068">
    <property type="entry name" value="uS15_NS1_RNA-bd_sf"/>
</dbReference>
<dbReference type="NCBIfam" id="TIGR00952">
    <property type="entry name" value="S15_bact"/>
    <property type="match status" value="1"/>
</dbReference>
<dbReference type="PANTHER" id="PTHR23321">
    <property type="entry name" value="RIBOSOMAL PROTEIN S15, BACTERIAL AND ORGANELLAR"/>
    <property type="match status" value="1"/>
</dbReference>
<dbReference type="PANTHER" id="PTHR23321:SF26">
    <property type="entry name" value="SMALL RIBOSOMAL SUBUNIT PROTEIN US15M"/>
    <property type="match status" value="1"/>
</dbReference>
<dbReference type="Pfam" id="PF00312">
    <property type="entry name" value="Ribosomal_S15"/>
    <property type="match status" value="1"/>
</dbReference>
<dbReference type="SMART" id="SM01387">
    <property type="entry name" value="Ribosomal_S15"/>
    <property type="match status" value="1"/>
</dbReference>
<dbReference type="SUPFAM" id="SSF47060">
    <property type="entry name" value="S15/NS1 RNA-binding domain"/>
    <property type="match status" value="1"/>
</dbReference>
<dbReference type="PROSITE" id="PS00362">
    <property type="entry name" value="RIBOSOMAL_S15"/>
    <property type="match status" value="1"/>
</dbReference>
<name>RR15_SACOF</name>
<keyword id="KW-0150">Chloroplast</keyword>
<keyword id="KW-0934">Plastid</keyword>
<keyword id="KW-0687">Ribonucleoprotein</keyword>
<keyword id="KW-0689">Ribosomal protein</keyword>
<protein>
    <recommendedName>
        <fullName evidence="2">Small ribosomal subunit protein uS15c</fullName>
    </recommendedName>
    <alternativeName>
        <fullName>30S ribosomal protein S15, chloroplastic</fullName>
    </alternativeName>
</protein>
<organism>
    <name type="scientific">Saccharum officinarum</name>
    <name type="common">Sugarcane</name>
    <dbReference type="NCBI Taxonomy" id="4547"/>
    <lineage>
        <taxon>Eukaryota</taxon>
        <taxon>Viridiplantae</taxon>
        <taxon>Streptophyta</taxon>
        <taxon>Embryophyta</taxon>
        <taxon>Tracheophyta</taxon>
        <taxon>Spermatophyta</taxon>
        <taxon>Magnoliopsida</taxon>
        <taxon>Liliopsida</taxon>
        <taxon>Poales</taxon>
        <taxon>Poaceae</taxon>
        <taxon>PACMAD clade</taxon>
        <taxon>Panicoideae</taxon>
        <taxon>Andropogonodae</taxon>
        <taxon>Andropogoneae</taxon>
        <taxon>Saccharinae</taxon>
        <taxon>Saccharum</taxon>
        <taxon>Saccharum officinarum species complex</taxon>
    </lineage>
</organism>
<feature type="chain" id="PRO_0000115651" description="Small ribosomal subunit protein uS15c">
    <location>
        <begin position="1"/>
        <end position="78"/>
    </location>
</feature>
<comment type="subunit">
    <text evidence="1">Part of the 30S ribosomal subunit.</text>
</comment>
<comment type="subcellular location">
    <subcellularLocation>
        <location>Plastid</location>
        <location>Chloroplast</location>
    </subcellularLocation>
</comment>
<comment type="similarity">
    <text evidence="2">Belongs to the universal ribosomal protein uS15 family.</text>
</comment>
<proteinExistence type="inferred from homology"/>
<geneLocation type="chloroplast"/>
<evidence type="ECO:0000250" key="1"/>
<evidence type="ECO:0000305" key="2"/>
<sequence length="78" mass="9444">MVKEEKQENRGSVEFQVFSFTNKIRRLASHLELHKKDFSSERGLRRLLGKRQRLLAYLAKKNRVRYKKLISQLDIREK</sequence>